<reference key="1">
    <citation type="journal article" date="1995" name="Appl. Environ. Microbiol.">
        <title>Sequencing and analysis of the prolate-headed lactococcal bacteriophage c2 genome and identification of the structural genes.</title>
        <authorList>
            <person name="Lubbers M.W."/>
            <person name="Waterfield N.R."/>
            <person name="Beresford T.P."/>
            <person name="Le Page R.W."/>
            <person name="Jarvis A.W."/>
        </authorList>
    </citation>
    <scope>NUCLEOTIDE SEQUENCE [GENOMIC DNA]</scope>
</reference>
<reference key="2">
    <citation type="journal article" date="1993" name="Can. J. Microbiol.">
        <title>Sequence analysis of the lysin gene region of the prolate lactococcal bacteriophage c2.</title>
        <authorList>
            <person name="Ward L.J."/>
            <person name="Beresford T.P."/>
            <person name="Lubbers M.W."/>
            <person name="Jarvis B.D."/>
            <person name="Jarvis A.W."/>
        </authorList>
    </citation>
    <scope>NUCLEOTIDE SEQUENCE [LARGE SCALE GENOMIC DNA]</scope>
</reference>
<reference key="3">
    <citation type="journal article" date="1994" name="Mol. Gen. Genet.">
        <title>Sequencing and analysis of the cos region of the lactococcal bacteriophage c2.</title>
        <authorList>
            <person name="Lubbers M.W."/>
            <person name="Ward L.J."/>
            <person name="Beresford T.P."/>
            <person name="Jarvis B.D."/>
            <person name="Jarvis A.W."/>
        </authorList>
    </citation>
    <scope>NUCLEOTIDE SEQUENCE [LARGE SCALE GENOMIC DNA]</scope>
</reference>
<organismHost>
    <name type="scientific">Lactococcus</name>
    <name type="common">lactic streptococci</name>
    <dbReference type="NCBI Taxonomy" id="1357"/>
</organismHost>
<evidence type="ECO:0000255" key="1"/>
<evidence type="ECO:0000256" key="2">
    <source>
        <dbReference type="SAM" id="MobiDB-lite"/>
    </source>
</evidence>
<evidence type="ECO:0000303" key="3">
    <source>
    </source>
</evidence>
<evidence type="ECO:0000305" key="4"/>
<comment type="function">
    <text evidence="4">Assembles to form a prolate capsid about 56 nm in length and 41 nm in width.</text>
</comment>
<comment type="subcellular location">
    <subcellularLocation>
        <location evidence="4">Virion</location>
    </subcellularLocation>
</comment>
<gene>
    <name type="primary">l5</name>
</gene>
<accession>Q38300</accession>
<dbReference type="EMBL" id="L48605">
    <property type="protein sequence ID" value="AAA92184.1"/>
    <property type="molecule type" value="Genomic_DNA"/>
</dbReference>
<dbReference type="RefSeq" id="NP_043553.1">
    <property type="nucleotide sequence ID" value="NC_001706.1"/>
</dbReference>
<dbReference type="SMR" id="Q38300"/>
<dbReference type="GeneID" id="1261180"/>
<dbReference type="KEGG" id="vg:1261180"/>
<dbReference type="Proteomes" id="UP000001835">
    <property type="component" value="Genome"/>
</dbReference>
<dbReference type="GO" id="GO:0019028">
    <property type="term" value="C:viral capsid"/>
    <property type="evidence" value="ECO:0007669"/>
    <property type="project" value="UniProtKB-KW"/>
</dbReference>
<dbReference type="Gene3D" id="3.30.2320.10">
    <property type="entry name" value="hypothetical protein PF0899 domain"/>
    <property type="match status" value="1"/>
</dbReference>
<dbReference type="Gene3D" id="3.30.2400.10">
    <property type="entry name" value="Major capsid protein gp5"/>
    <property type="match status" value="1"/>
</dbReference>
<dbReference type="InterPro" id="IPR009559">
    <property type="entry name" value="Lactococcus_phage_c2_MCP"/>
</dbReference>
<dbReference type="Pfam" id="PF06673">
    <property type="entry name" value="L_lactis_ph-MCP"/>
    <property type="match status" value="1"/>
</dbReference>
<dbReference type="SUPFAM" id="SSF56563">
    <property type="entry name" value="Major capsid protein gp5"/>
    <property type="match status" value="1"/>
</dbReference>
<name>CAPSD_BPLC2</name>
<feature type="chain" id="PRO_0000432348" description="Major capsid protein">
    <location>
        <begin position="1"/>
        <end position="480"/>
    </location>
</feature>
<feature type="region of interest" description="Disordered" evidence="2">
    <location>
        <begin position="163"/>
        <end position="184"/>
    </location>
</feature>
<feature type="coiled-coil region" evidence="1">
    <location>
        <begin position="138"/>
        <end position="175"/>
    </location>
</feature>
<keyword id="KW-0167">Capsid protein</keyword>
<keyword id="KW-0175">Coiled coil</keyword>
<keyword id="KW-0426">Late protein</keyword>
<keyword id="KW-1185">Reference proteome</keyword>
<keyword id="KW-0946">Virion</keyword>
<organism>
    <name type="scientific">Lactococcus phage c2</name>
    <dbReference type="NCBI Taxonomy" id="2681624"/>
    <lineage>
        <taxon>Viruses</taxon>
        <taxon>Duplodnaviria</taxon>
        <taxon>Heunggongvirae</taxon>
        <taxon>Uroviricota</taxon>
        <taxon>Caudoviricetes</taxon>
        <taxon>Ceduovirus</taxon>
        <taxon>Ceduovirus c2</taxon>
    </lineage>
</organism>
<protein>
    <recommendedName>
        <fullName evidence="3">Major capsid protein</fullName>
    </recommendedName>
    <alternativeName>
        <fullName evidence="4">Gene product 15</fullName>
        <shortName evidence="4">gp15</shortName>
    </alternativeName>
    <alternativeName>
        <fullName evidence="4">Major head protein</fullName>
    </alternativeName>
</protein>
<proteinExistence type="predicted"/>
<sequence>MKVKAVRGIANPLGTIDAHGTVIESIANAGDGVDILNRHREKIGSGFVHLEGDNVILTGYVDEEQYTAEKIEETGLSVGFNANGVKAREIDGVGYYKDVTITEVSLTPLPSNKGAKVTKVREENKGEQEQMGANETQEIMKQAIEAGVKVRELEAKVEELNKEREELKKEREASIPSEKPEDAERKFMRELGSKMAEMPEQGFLREFANGADLNVVNSLGSITSKYARKSGIYDGAMKARFQGLTLAEDGVDDTFISGTFKAGTDKNKSQTATKRSLRPQMAEAYLQMDKATVRGVNDSGALSEYVMSEMVNRVIQKVEYNMILGSVDGSNGFYGLKTATDGWTKQIEYTDLFEGITDAVAECSISDAITIVMSPQTFAELRKAKGTDGHSRFNELATKEQIAQSFGAVNLETRVWMPKDEVAVYNHDEYVLIGDLNVENYNDFDLRYNVEQWLSETLVGGSIRGKNRSAYLKKKGSLGV</sequence>